<comment type="function">
    <text evidence="1">Involved in the synthesis of the major structural component of photosynthetic membranes.</text>
</comment>
<comment type="catalytic activity">
    <reaction>
        <text>a 1,2-diacyl-sn-glycerol + UDP-alpha-D-galactose = a 1,2-diacyl-3-O-(beta-D-galactosyl)-sn-glycerol + UDP + H(+)</text>
        <dbReference type="Rhea" id="RHEA:14945"/>
        <dbReference type="ChEBI" id="CHEBI:15378"/>
        <dbReference type="ChEBI" id="CHEBI:17615"/>
        <dbReference type="ChEBI" id="CHEBI:17815"/>
        <dbReference type="ChEBI" id="CHEBI:58223"/>
        <dbReference type="ChEBI" id="CHEBI:66914"/>
        <dbReference type="EC" id="2.4.1.46"/>
    </reaction>
</comment>
<comment type="subcellular location">
    <subcellularLocation>
        <location evidence="3">Plastid</location>
        <location evidence="3">Chloroplast membrane</location>
    </subcellularLocation>
</comment>
<comment type="similarity">
    <text evidence="3">Belongs to the glycosyltransferase 28 family.</text>
</comment>
<protein>
    <recommendedName>
        <fullName>Probable monogalactosyldiacylglycerol synthase 2, chloroplastic</fullName>
        <shortName>OsMGD2</shortName>
        <ecNumber>2.4.1.46</ecNumber>
    </recommendedName>
</protein>
<keyword id="KW-0150">Chloroplast</keyword>
<keyword id="KW-0328">Glycosyltransferase</keyword>
<keyword id="KW-0472">Membrane</keyword>
<keyword id="KW-0934">Plastid</keyword>
<keyword id="KW-1185">Reference proteome</keyword>
<keyword id="KW-0808">Transferase</keyword>
<keyword id="KW-0809">Transit peptide</keyword>
<gene>
    <name type="primary">MGD2</name>
    <name type="ORF">OsI_027692</name>
</gene>
<organism>
    <name type="scientific">Oryza sativa subsp. indica</name>
    <name type="common">Rice</name>
    <dbReference type="NCBI Taxonomy" id="39946"/>
    <lineage>
        <taxon>Eukaryota</taxon>
        <taxon>Viridiplantae</taxon>
        <taxon>Streptophyta</taxon>
        <taxon>Embryophyta</taxon>
        <taxon>Tracheophyta</taxon>
        <taxon>Spermatophyta</taxon>
        <taxon>Magnoliopsida</taxon>
        <taxon>Liliopsida</taxon>
        <taxon>Poales</taxon>
        <taxon>Poaceae</taxon>
        <taxon>BOP clade</taxon>
        <taxon>Oryzoideae</taxon>
        <taxon>Oryzeae</taxon>
        <taxon>Oryzinae</taxon>
        <taxon>Oryza</taxon>
        <taxon>Oryza sativa</taxon>
    </lineage>
</organism>
<feature type="transit peptide" description="Chloroplast" evidence="2">
    <location>
        <begin position="1"/>
        <end position="42"/>
    </location>
</feature>
<feature type="chain" id="PRO_0000349428" description="Probable monogalactosyldiacylglycerol synthase 2, chloroplastic">
    <location>
        <begin position="43"/>
        <end position="469"/>
    </location>
</feature>
<proteinExistence type="inferred from homology"/>
<reference key="1">
    <citation type="journal article" date="2005" name="PLoS Biol.">
        <title>The genomes of Oryza sativa: a history of duplications.</title>
        <authorList>
            <person name="Yu J."/>
            <person name="Wang J."/>
            <person name="Lin W."/>
            <person name="Li S."/>
            <person name="Li H."/>
            <person name="Zhou J."/>
            <person name="Ni P."/>
            <person name="Dong W."/>
            <person name="Hu S."/>
            <person name="Zeng C."/>
            <person name="Zhang J."/>
            <person name="Zhang Y."/>
            <person name="Li R."/>
            <person name="Xu Z."/>
            <person name="Li S."/>
            <person name="Li X."/>
            <person name="Zheng H."/>
            <person name="Cong L."/>
            <person name="Lin L."/>
            <person name="Yin J."/>
            <person name="Geng J."/>
            <person name="Li G."/>
            <person name="Shi J."/>
            <person name="Liu J."/>
            <person name="Lv H."/>
            <person name="Li J."/>
            <person name="Wang J."/>
            <person name="Deng Y."/>
            <person name="Ran L."/>
            <person name="Shi X."/>
            <person name="Wang X."/>
            <person name="Wu Q."/>
            <person name="Li C."/>
            <person name="Ren X."/>
            <person name="Wang J."/>
            <person name="Wang X."/>
            <person name="Li D."/>
            <person name="Liu D."/>
            <person name="Zhang X."/>
            <person name="Ji Z."/>
            <person name="Zhao W."/>
            <person name="Sun Y."/>
            <person name="Zhang Z."/>
            <person name="Bao J."/>
            <person name="Han Y."/>
            <person name="Dong L."/>
            <person name="Ji J."/>
            <person name="Chen P."/>
            <person name="Wu S."/>
            <person name="Liu J."/>
            <person name="Xiao Y."/>
            <person name="Bu D."/>
            <person name="Tan J."/>
            <person name="Yang L."/>
            <person name="Ye C."/>
            <person name="Zhang J."/>
            <person name="Xu J."/>
            <person name="Zhou Y."/>
            <person name="Yu Y."/>
            <person name="Zhang B."/>
            <person name="Zhuang S."/>
            <person name="Wei H."/>
            <person name="Liu B."/>
            <person name="Lei M."/>
            <person name="Yu H."/>
            <person name="Li Y."/>
            <person name="Xu H."/>
            <person name="Wei S."/>
            <person name="He X."/>
            <person name="Fang L."/>
            <person name="Zhang Z."/>
            <person name="Zhang Y."/>
            <person name="Huang X."/>
            <person name="Su Z."/>
            <person name="Tong W."/>
            <person name="Li J."/>
            <person name="Tong Z."/>
            <person name="Li S."/>
            <person name="Ye J."/>
            <person name="Wang L."/>
            <person name="Fang L."/>
            <person name="Lei T."/>
            <person name="Chen C.-S."/>
            <person name="Chen H.-C."/>
            <person name="Xu Z."/>
            <person name="Li H."/>
            <person name="Huang H."/>
            <person name="Zhang F."/>
            <person name="Xu H."/>
            <person name="Li N."/>
            <person name="Zhao C."/>
            <person name="Li S."/>
            <person name="Dong L."/>
            <person name="Huang Y."/>
            <person name="Li L."/>
            <person name="Xi Y."/>
            <person name="Qi Q."/>
            <person name="Li W."/>
            <person name="Zhang B."/>
            <person name="Hu W."/>
            <person name="Zhang Y."/>
            <person name="Tian X."/>
            <person name="Jiao Y."/>
            <person name="Liang X."/>
            <person name="Jin J."/>
            <person name="Gao L."/>
            <person name="Zheng W."/>
            <person name="Hao B."/>
            <person name="Liu S.-M."/>
            <person name="Wang W."/>
            <person name="Yuan L."/>
            <person name="Cao M."/>
            <person name="McDermott J."/>
            <person name="Samudrala R."/>
            <person name="Wang J."/>
            <person name="Wong G.K.-S."/>
            <person name="Yang H."/>
        </authorList>
    </citation>
    <scope>NUCLEOTIDE SEQUENCE [LARGE SCALE GENOMIC DNA]</scope>
    <source>
        <strain>cv. 93-11</strain>
    </source>
</reference>
<sequence>MVISVATPRRSIRDAVLGGVLGAGGRQLYQPLRCAFYDGAAGGGLTAALSEDGAEGGVPLPCGRKTAAAKNVLILMSDTGGGHRASAEALRDAFRLEFGDAYQVFVRDLGKEYGGWPLNDMERSYKFMIRHVRLWKVAFHGTSPRWVHGMYLAALAYFYANEVVAGIMRYNPDIIISVHPLMQHIPLWVLKWQSLHPKVPFVTVITDLNTCHPTWFHHGVTRCYCPSAEVAKRALLRGLEPSQIRVYGLPIRPSFCRAVLDKDELRKELDMDPDLPAVLLMGGGEGMGPVEETATALSDELYDRRRRRPVGQIVVICGRNQVLRSTLQSSRWNVPVKIRGFEKQMEKWMGACDCIITKAGPGTIAEALIRGLPIILNDFIPGQEVGNVPYVVDNGAGVFSKDPREAARQVARWFTTHTNELRRYSLNALKLAQPEAVFDIVKDIHKLQQQPATVTRIPYSLTSSFSYSI</sequence>
<accession>A2YTP9</accession>
<evidence type="ECO:0000250" key="1"/>
<evidence type="ECO:0000255" key="2"/>
<evidence type="ECO:0000305" key="3"/>
<name>MGDG2_ORYSI</name>
<dbReference type="EC" id="2.4.1.46"/>
<dbReference type="EMBL" id="CM000133">
    <property type="status" value="NOT_ANNOTATED_CDS"/>
    <property type="molecule type" value="Genomic_DNA"/>
</dbReference>
<dbReference type="SMR" id="A2YTP9"/>
<dbReference type="STRING" id="39946.A2YTP9"/>
<dbReference type="Proteomes" id="UP000007015">
    <property type="component" value="Chromosome 8"/>
</dbReference>
<dbReference type="GO" id="GO:0031969">
    <property type="term" value="C:chloroplast membrane"/>
    <property type="evidence" value="ECO:0007669"/>
    <property type="project" value="UniProtKB-SubCell"/>
</dbReference>
<dbReference type="GO" id="GO:0046509">
    <property type="term" value="F:1,2-diacylglycerol 3-beta-galactosyltransferase activity"/>
    <property type="evidence" value="ECO:0007669"/>
    <property type="project" value="UniProtKB-EC"/>
</dbReference>
<dbReference type="GO" id="GO:0009247">
    <property type="term" value="P:glycolipid biosynthetic process"/>
    <property type="evidence" value="ECO:0007669"/>
    <property type="project" value="InterPro"/>
</dbReference>
<dbReference type="CDD" id="cd17507">
    <property type="entry name" value="GT28_Beta-DGS-like"/>
    <property type="match status" value="1"/>
</dbReference>
<dbReference type="Gene3D" id="3.40.50.2000">
    <property type="entry name" value="Glycogen Phosphorylase B"/>
    <property type="match status" value="1"/>
</dbReference>
<dbReference type="InterPro" id="IPR009695">
    <property type="entry name" value="Diacylglyc_glucosyltr_N"/>
</dbReference>
<dbReference type="InterPro" id="IPR007235">
    <property type="entry name" value="Glyco_trans_28_C"/>
</dbReference>
<dbReference type="InterPro" id="IPR050519">
    <property type="entry name" value="Glycosyltransf_28_UgtP"/>
</dbReference>
<dbReference type="PANTHER" id="PTHR43025">
    <property type="entry name" value="MONOGALACTOSYLDIACYLGLYCEROL SYNTHASE"/>
    <property type="match status" value="1"/>
</dbReference>
<dbReference type="PANTHER" id="PTHR43025:SF8">
    <property type="entry name" value="MONOGALACTOSYLDIACYLGLYCEROL SYNTHASE 2, CHLOROPLASTIC-RELATED"/>
    <property type="match status" value="1"/>
</dbReference>
<dbReference type="Pfam" id="PF04101">
    <property type="entry name" value="Glyco_tran_28_C"/>
    <property type="match status" value="1"/>
</dbReference>
<dbReference type="Pfam" id="PF06925">
    <property type="entry name" value="MGDG_synth"/>
    <property type="match status" value="1"/>
</dbReference>
<dbReference type="SUPFAM" id="SSF53756">
    <property type="entry name" value="UDP-Glycosyltransferase/glycogen phosphorylase"/>
    <property type="match status" value="1"/>
</dbReference>